<proteinExistence type="evidence at protein level"/>
<keyword id="KW-1003">Cell membrane</keyword>
<keyword id="KW-0472">Membrane</keyword>
<keyword id="KW-1185">Reference proteome</keyword>
<keyword id="KW-0812">Transmembrane</keyword>
<keyword id="KW-1133">Transmembrane helix</keyword>
<keyword id="KW-0813">Transport</keyword>
<sequence>MTNPEDIPSRIEGKNVARLVCCFLGVGSLVAWNAMLTITDYYYQLFPKYHPSRVLTIVYQLVANVFIITLATKEAKLNTRLRNIFGYSLYTAGTFCLIILDLASHGSGSVVAYVLLCLIVALFGLADAFVQGAMVGDLSFMSPDFIQAFMAGLGIAGALTSVLRLITKAIFDNSPDGLRKGALLFIGIATLIELACVFLYTLVFAKLPIVKYYRAKAGKEGAKTVSADLAAAGLQEQAEQVHQMDESKIQKLTKKQLLRENIDLGINLSLIYVVTLSIFPGFLYENTGEHRLGDWYAPVLVAMYNGWDAISRFIPSIKPLAMESRKWITVCVVARLLLVPAFYFTAKYADQGWMLFLTSFLGLSNGYLTVCIFSTAPKGYNGPEANALGNLMCVFLLGGIFAGVCLGWLWLIGNDSF</sequence>
<gene>
    <name type="primary">ENT7</name>
    <name type="ordered locus">At1g61630</name>
    <name type="ORF">T25B24.2</name>
</gene>
<dbReference type="EMBL" id="AF426398">
    <property type="protein sequence ID" value="AAL25094.1"/>
    <property type="molecule type" value="mRNA"/>
</dbReference>
<dbReference type="EMBL" id="AC005850">
    <property type="protein sequence ID" value="AAD25545.1"/>
    <property type="status" value="ALT_SEQ"/>
    <property type="molecule type" value="Genomic_DNA"/>
</dbReference>
<dbReference type="EMBL" id="CP002684">
    <property type="protein sequence ID" value="AEE33864.1"/>
    <property type="molecule type" value="Genomic_DNA"/>
</dbReference>
<dbReference type="EMBL" id="DQ446383">
    <property type="protein sequence ID" value="ABE65731.1"/>
    <property type="molecule type" value="mRNA"/>
</dbReference>
<dbReference type="PIR" id="G96641">
    <property type="entry name" value="G96641"/>
</dbReference>
<dbReference type="RefSeq" id="NP_176357.2">
    <property type="nucleotide sequence ID" value="NM_104845.3"/>
</dbReference>
<dbReference type="SMR" id="Q944P0"/>
<dbReference type="FunCoup" id="Q944P0">
    <property type="interactions" value="113"/>
</dbReference>
<dbReference type="STRING" id="3702.Q944P0"/>
<dbReference type="TCDB" id="2.A.57.1.10">
    <property type="family name" value="the equilibrative nucleoside transporter (ent) family"/>
</dbReference>
<dbReference type="PaxDb" id="3702-AT1G61630.1"/>
<dbReference type="ProteomicsDB" id="221900"/>
<dbReference type="EnsemblPlants" id="AT1G61630.1">
    <property type="protein sequence ID" value="AT1G61630.1"/>
    <property type="gene ID" value="AT1G61630"/>
</dbReference>
<dbReference type="GeneID" id="842459"/>
<dbReference type="Gramene" id="AT1G61630.1">
    <property type="protein sequence ID" value="AT1G61630.1"/>
    <property type="gene ID" value="AT1G61630"/>
</dbReference>
<dbReference type="KEGG" id="ath:AT1G61630"/>
<dbReference type="Araport" id="AT1G61630"/>
<dbReference type="TAIR" id="AT1G61630">
    <property type="gene designation" value="ENT7"/>
</dbReference>
<dbReference type="eggNOG" id="KOG1479">
    <property type="taxonomic scope" value="Eukaryota"/>
</dbReference>
<dbReference type="HOGENOM" id="CLU_021611_5_1_1"/>
<dbReference type="InParanoid" id="Q944P0"/>
<dbReference type="OMA" id="WLIGNDS"/>
<dbReference type="PhylomeDB" id="Q944P0"/>
<dbReference type="PRO" id="PR:Q944P0"/>
<dbReference type="Proteomes" id="UP000006548">
    <property type="component" value="Chromosome 1"/>
</dbReference>
<dbReference type="ExpressionAtlas" id="Q944P0">
    <property type="expression patterns" value="baseline and differential"/>
</dbReference>
<dbReference type="GO" id="GO:0005886">
    <property type="term" value="C:plasma membrane"/>
    <property type="evidence" value="ECO:0007669"/>
    <property type="project" value="UniProtKB-SubCell"/>
</dbReference>
<dbReference type="GO" id="GO:0005337">
    <property type="term" value="F:nucleoside transmembrane transporter activity"/>
    <property type="evidence" value="ECO:0000314"/>
    <property type="project" value="UniProtKB"/>
</dbReference>
<dbReference type="GO" id="GO:0015858">
    <property type="term" value="P:nucleoside transport"/>
    <property type="evidence" value="ECO:0000314"/>
    <property type="project" value="UniProtKB"/>
</dbReference>
<dbReference type="InterPro" id="IPR002259">
    <property type="entry name" value="Eqnu_transpt"/>
</dbReference>
<dbReference type="InterPro" id="IPR036259">
    <property type="entry name" value="MFS_trans_sf"/>
</dbReference>
<dbReference type="PANTHER" id="PTHR10332">
    <property type="entry name" value="EQUILIBRATIVE NUCLEOSIDE TRANSPORTER"/>
    <property type="match status" value="1"/>
</dbReference>
<dbReference type="PANTHER" id="PTHR10332:SF65">
    <property type="entry name" value="EQUILIBRATIVE NUCLEOTIDE TRANSPORTER 7"/>
    <property type="match status" value="1"/>
</dbReference>
<dbReference type="Pfam" id="PF01733">
    <property type="entry name" value="Nucleoside_tran"/>
    <property type="match status" value="1"/>
</dbReference>
<dbReference type="PIRSF" id="PIRSF016379">
    <property type="entry name" value="ENT"/>
    <property type="match status" value="1"/>
</dbReference>
<dbReference type="PRINTS" id="PR01130">
    <property type="entry name" value="DERENTRNSPRT"/>
</dbReference>
<dbReference type="SUPFAM" id="SSF103473">
    <property type="entry name" value="MFS general substrate transporter"/>
    <property type="match status" value="1"/>
</dbReference>
<protein>
    <recommendedName>
        <fullName>Equilibrative nucleotide transporter 7</fullName>
        <shortName>AtENT7</shortName>
    </recommendedName>
    <alternativeName>
        <fullName>Nucleoside transporter ENT7</fullName>
    </alternativeName>
</protein>
<comment type="function">
    <text evidence="4">Nucleoside transporter that can mediate uptake of adenosine, uridine, guanosine or cytidine when expressed in a heterologous system (yeast).</text>
</comment>
<comment type="biophysicochemical properties">
    <kinetics>
        <KM evidence="4">9.8 uM for adenosine</KM>
        <KM evidence="4">13.4 uM for uridine</KM>
        <KM evidence="4">9.4 uM for guanosine</KM>
        <KM evidence="4">40 uM for cytidine</KM>
    </kinetics>
</comment>
<comment type="subcellular location">
    <subcellularLocation>
        <location evidence="1">Cell membrane</location>
        <topology evidence="5">Multi-pass membrane protein</topology>
    </subcellularLocation>
    <text>Plasma membrane.</text>
</comment>
<comment type="tissue specificity">
    <text evidence="3">Expressed in leaves and flowers.</text>
</comment>
<comment type="similarity">
    <text evidence="5">Belongs to the SLC29A/ENT transporter (TC 2.A.57) family.</text>
</comment>
<comment type="sequence caution" evidence="5">
    <conflict type="erroneous gene model prediction">
        <sequence resource="EMBL-CDS" id="AAD25545"/>
    </conflict>
</comment>
<accession>Q944P0</accession>
<accession>Q9SY87</accession>
<feature type="chain" id="PRO_0000419160" description="Equilibrative nucleotide transporter 7">
    <location>
        <begin position="1"/>
        <end position="417"/>
    </location>
</feature>
<feature type="transmembrane region" description="Helical" evidence="2">
    <location>
        <begin position="19"/>
        <end position="39"/>
    </location>
</feature>
<feature type="transmembrane region" description="Helical" evidence="2">
    <location>
        <begin position="54"/>
        <end position="74"/>
    </location>
</feature>
<feature type="transmembrane region" description="Helical" evidence="2">
    <location>
        <begin position="84"/>
        <end position="104"/>
    </location>
</feature>
<feature type="transmembrane region" description="Helical" evidence="2">
    <location>
        <begin position="110"/>
        <end position="130"/>
    </location>
</feature>
<feature type="transmembrane region" description="Helical" evidence="2">
    <location>
        <begin position="143"/>
        <end position="163"/>
    </location>
</feature>
<feature type="transmembrane region" description="Helical" evidence="2">
    <location>
        <begin position="184"/>
        <end position="204"/>
    </location>
</feature>
<feature type="transmembrane region" description="Helical" evidence="2">
    <location>
        <begin position="264"/>
        <end position="284"/>
    </location>
</feature>
<feature type="transmembrane region" description="Helical" evidence="2">
    <location>
        <begin position="293"/>
        <end position="315"/>
    </location>
</feature>
<feature type="transmembrane region" description="Helical" evidence="2">
    <location>
        <begin position="326"/>
        <end position="346"/>
    </location>
</feature>
<feature type="transmembrane region" description="Helical" evidence="2">
    <location>
        <begin position="353"/>
        <end position="373"/>
    </location>
</feature>
<feature type="transmembrane region" description="Helical" evidence="2">
    <location>
        <begin position="392"/>
        <end position="412"/>
    </location>
</feature>
<organism>
    <name type="scientific">Arabidopsis thaliana</name>
    <name type="common">Mouse-ear cress</name>
    <dbReference type="NCBI Taxonomy" id="3702"/>
    <lineage>
        <taxon>Eukaryota</taxon>
        <taxon>Viridiplantae</taxon>
        <taxon>Streptophyta</taxon>
        <taxon>Embryophyta</taxon>
        <taxon>Tracheophyta</taxon>
        <taxon>Spermatophyta</taxon>
        <taxon>Magnoliopsida</taxon>
        <taxon>eudicotyledons</taxon>
        <taxon>Gunneridae</taxon>
        <taxon>Pentapetalae</taxon>
        <taxon>rosids</taxon>
        <taxon>malvids</taxon>
        <taxon>Brassicales</taxon>
        <taxon>Brassicaceae</taxon>
        <taxon>Camelineae</taxon>
        <taxon>Arabidopsis</taxon>
    </lineage>
</organism>
<name>ENT7_ARATH</name>
<evidence type="ECO:0000250" key="1"/>
<evidence type="ECO:0000255" key="2"/>
<evidence type="ECO:0000269" key="3">
    <source>
    </source>
</evidence>
<evidence type="ECO:0000269" key="4">
    <source>
    </source>
</evidence>
<evidence type="ECO:0000305" key="5"/>
<reference key="1">
    <citation type="journal article" date="2003" name="J. Biol. Chem.">
        <title>Equilibrative nucleoside transporters of Arabidopsis thaliana. cDNA cloning, expression pattern, and analysis of transport activities.</title>
        <authorList>
            <person name="Li G."/>
            <person name="Liu K."/>
            <person name="Baldwin S.A."/>
            <person name="Wang D."/>
        </authorList>
    </citation>
    <scope>NUCLEOTIDE SEQUENCE [MRNA]</scope>
    <scope>TISSUE SPECIFICITY</scope>
    <scope>INDUCTION</scope>
</reference>
<reference key="2">
    <citation type="journal article" date="2000" name="Nature">
        <title>Sequence and analysis of chromosome 1 of the plant Arabidopsis thaliana.</title>
        <authorList>
            <person name="Theologis A."/>
            <person name="Ecker J.R."/>
            <person name="Palm C.J."/>
            <person name="Federspiel N.A."/>
            <person name="Kaul S."/>
            <person name="White O."/>
            <person name="Alonso J."/>
            <person name="Altafi H."/>
            <person name="Araujo R."/>
            <person name="Bowman C.L."/>
            <person name="Brooks S.Y."/>
            <person name="Buehler E."/>
            <person name="Chan A."/>
            <person name="Chao Q."/>
            <person name="Chen H."/>
            <person name="Cheuk R.F."/>
            <person name="Chin C.W."/>
            <person name="Chung M.K."/>
            <person name="Conn L."/>
            <person name="Conway A.B."/>
            <person name="Conway A.R."/>
            <person name="Creasy T.H."/>
            <person name="Dewar K."/>
            <person name="Dunn P."/>
            <person name="Etgu P."/>
            <person name="Feldblyum T.V."/>
            <person name="Feng J.-D."/>
            <person name="Fong B."/>
            <person name="Fujii C.Y."/>
            <person name="Gill J.E."/>
            <person name="Goldsmith A.D."/>
            <person name="Haas B."/>
            <person name="Hansen N.F."/>
            <person name="Hughes B."/>
            <person name="Huizar L."/>
            <person name="Hunter J.L."/>
            <person name="Jenkins J."/>
            <person name="Johnson-Hopson C."/>
            <person name="Khan S."/>
            <person name="Khaykin E."/>
            <person name="Kim C.J."/>
            <person name="Koo H.L."/>
            <person name="Kremenetskaia I."/>
            <person name="Kurtz D.B."/>
            <person name="Kwan A."/>
            <person name="Lam B."/>
            <person name="Langin-Hooper S."/>
            <person name="Lee A."/>
            <person name="Lee J.M."/>
            <person name="Lenz C.A."/>
            <person name="Li J.H."/>
            <person name="Li Y.-P."/>
            <person name="Lin X."/>
            <person name="Liu S.X."/>
            <person name="Liu Z.A."/>
            <person name="Luros J.S."/>
            <person name="Maiti R."/>
            <person name="Marziali A."/>
            <person name="Militscher J."/>
            <person name="Miranda M."/>
            <person name="Nguyen M."/>
            <person name="Nierman W.C."/>
            <person name="Osborne B.I."/>
            <person name="Pai G."/>
            <person name="Peterson J."/>
            <person name="Pham P.K."/>
            <person name="Rizzo M."/>
            <person name="Rooney T."/>
            <person name="Rowley D."/>
            <person name="Sakano H."/>
            <person name="Salzberg S.L."/>
            <person name="Schwartz J.R."/>
            <person name="Shinn P."/>
            <person name="Southwick A.M."/>
            <person name="Sun H."/>
            <person name="Tallon L.J."/>
            <person name="Tambunga G."/>
            <person name="Toriumi M.J."/>
            <person name="Town C.D."/>
            <person name="Utterback T."/>
            <person name="Van Aken S."/>
            <person name="Vaysberg M."/>
            <person name="Vysotskaia V.S."/>
            <person name="Walker M."/>
            <person name="Wu D."/>
            <person name="Yu G."/>
            <person name="Fraser C.M."/>
            <person name="Venter J.C."/>
            <person name="Davis R.W."/>
        </authorList>
    </citation>
    <scope>NUCLEOTIDE SEQUENCE [LARGE SCALE GENOMIC DNA]</scope>
    <source>
        <strain>cv. Columbia</strain>
    </source>
</reference>
<reference key="3">
    <citation type="journal article" date="2017" name="Plant J.">
        <title>Araport11: a complete reannotation of the Arabidopsis thaliana reference genome.</title>
        <authorList>
            <person name="Cheng C.Y."/>
            <person name="Krishnakumar V."/>
            <person name="Chan A.P."/>
            <person name="Thibaud-Nissen F."/>
            <person name="Schobel S."/>
            <person name="Town C.D."/>
        </authorList>
    </citation>
    <scope>GENOME REANNOTATION</scope>
    <source>
        <strain>cv. Columbia</strain>
    </source>
</reference>
<reference key="4">
    <citation type="journal article" date="2006" name="Plant Biotechnol. J.">
        <title>Simultaneous high-throughput recombinational cloning of open reading frames in closed and open configurations.</title>
        <authorList>
            <person name="Underwood B.A."/>
            <person name="Vanderhaeghen R."/>
            <person name="Whitford R."/>
            <person name="Town C.D."/>
            <person name="Hilson P."/>
        </authorList>
    </citation>
    <scope>NUCLEOTIDE SEQUENCE [LARGE SCALE MRNA]</scope>
    <source>
        <strain>cv. Columbia</strain>
    </source>
</reference>
<reference key="5">
    <citation type="journal article" date="2004" name="Biochem. J.">
        <title>Characterization of three novel members of the Arabidopsis thaliana equilibrative nucleoside transporter (ENT) family.</title>
        <authorList>
            <person name="Wormit A."/>
            <person name="Traub M."/>
            <person name="Floerchinger M."/>
            <person name="Neuhaus H.E."/>
            <person name="Moehlmann T."/>
        </authorList>
    </citation>
    <scope>FUNCTION</scope>
    <scope>BIOPHYSICOCHEMICAL PROPERTIES</scope>
</reference>